<comment type="catalytic activity">
    <reaction evidence="1">
        <text>L-glutamine + H2O = L-glutamate + NH4(+)</text>
        <dbReference type="Rhea" id="RHEA:15889"/>
        <dbReference type="ChEBI" id="CHEBI:15377"/>
        <dbReference type="ChEBI" id="CHEBI:28938"/>
        <dbReference type="ChEBI" id="CHEBI:29985"/>
        <dbReference type="ChEBI" id="CHEBI:58359"/>
        <dbReference type="EC" id="3.5.1.2"/>
    </reaction>
</comment>
<comment type="subunit">
    <text evidence="1">Homotetramer.</text>
</comment>
<comment type="similarity">
    <text evidence="1">Belongs to the glutaminase family.</text>
</comment>
<protein>
    <recommendedName>
        <fullName evidence="1">Glutaminase</fullName>
        <ecNumber evidence="1">3.5.1.2</ecNumber>
    </recommendedName>
</protein>
<accession>B5XQU9</accession>
<gene>
    <name evidence="1" type="primary">glsA</name>
    <name type="ordered locus">KPK_2743</name>
</gene>
<dbReference type="EC" id="3.5.1.2" evidence="1"/>
<dbReference type="EMBL" id="CP000964">
    <property type="protein sequence ID" value="ACI11603.1"/>
    <property type="molecule type" value="Genomic_DNA"/>
</dbReference>
<dbReference type="SMR" id="B5XQU9"/>
<dbReference type="KEGG" id="kpe:KPK_2743"/>
<dbReference type="HOGENOM" id="CLU_027932_1_1_6"/>
<dbReference type="Proteomes" id="UP000001734">
    <property type="component" value="Chromosome"/>
</dbReference>
<dbReference type="GO" id="GO:0004359">
    <property type="term" value="F:glutaminase activity"/>
    <property type="evidence" value="ECO:0007669"/>
    <property type="project" value="UniProtKB-UniRule"/>
</dbReference>
<dbReference type="GO" id="GO:0006537">
    <property type="term" value="P:glutamate biosynthetic process"/>
    <property type="evidence" value="ECO:0007669"/>
    <property type="project" value="TreeGrafter"/>
</dbReference>
<dbReference type="GO" id="GO:0006543">
    <property type="term" value="P:glutamine catabolic process"/>
    <property type="evidence" value="ECO:0007669"/>
    <property type="project" value="TreeGrafter"/>
</dbReference>
<dbReference type="FunFam" id="3.40.710.10:FF:000005">
    <property type="entry name" value="Glutaminase"/>
    <property type="match status" value="1"/>
</dbReference>
<dbReference type="Gene3D" id="3.40.710.10">
    <property type="entry name" value="DD-peptidase/beta-lactamase superfamily"/>
    <property type="match status" value="1"/>
</dbReference>
<dbReference type="HAMAP" id="MF_00313">
    <property type="entry name" value="Glutaminase"/>
    <property type="match status" value="1"/>
</dbReference>
<dbReference type="InterPro" id="IPR012338">
    <property type="entry name" value="Beta-lactam/transpept-like"/>
</dbReference>
<dbReference type="InterPro" id="IPR015868">
    <property type="entry name" value="Glutaminase"/>
</dbReference>
<dbReference type="NCBIfam" id="TIGR03814">
    <property type="entry name" value="Gln_ase"/>
    <property type="match status" value="1"/>
</dbReference>
<dbReference type="NCBIfam" id="NF002132">
    <property type="entry name" value="PRK00971.1-1"/>
    <property type="match status" value="1"/>
</dbReference>
<dbReference type="NCBIfam" id="NF002133">
    <property type="entry name" value="PRK00971.1-2"/>
    <property type="match status" value="1"/>
</dbReference>
<dbReference type="PANTHER" id="PTHR12544">
    <property type="entry name" value="GLUTAMINASE"/>
    <property type="match status" value="1"/>
</dbReference>
<dbReference type="PANTHER" id="PTHR12544:SF29">
    <property type="entry name" value="GLUTAMINASE"/>
    <property type="match status" value="1"/>
</dbReference>
<dbReference type="Pfam" id="PF04960">
    <property type="entry name" value="Glutaminase"/>
    <property type="match status" value="1"/>
</dbReference>
<dbReference type="SUPFAM" id="SSF56601">
    <property type="entry name" value="beta-lactamase/transpeptidase-like"/>
    <property type="match status" value="1"/>
</dbReference>
<organism>
    <name type="scientific">Klebsiella pneumoniae (strain 342)</name>
    <dbReference type="NCBI Taxonomy" id="507522"/>
    <lineage>
        <taxon>Bacteria</taxon>
        <taxon>Pseudomonadati</taxon>
        <taxon>Pseudomonadota</taxon>
        <taxon>Gammaproteobacteria</taxon>
        <taxon>Enterobacterales</taxon>
        <taxon>Enterobacteriaceae</taxon>
        <taxon>Klebsiella/Raoultella group</taxon>
        <taxon>Klebsiella</taxon>
        <taxon>Klebsiella pneumoniae complex</taxon>
    </lineage>
</organism>
<reference key="1">
    <citation type="journal article" date="2008" name="PLoS Genet.">
        <title>Complete genome sequence of the N2-fixing broad host range endophyte Klebsiella pneumoniae 342 and virulence predictions verified in mice.</title>
        <authorList>
            <person name="Fouts D.E."/>
            <person name="Tyler H.L."/>
            <person name="DeBoy R.T."/>
            <person name="Daugherty S."/>
            <person name="Ren Q."/>
            <person name="Badger J.H."/>
            <person name="Durkin A.S."/>
            <person name="Huot H."/>
            <person name="Shrivastava S."/>
            <person name="Kothari S."/>
            <person name="Dodson R.J."/>
            <person name="Mohamoud Y."/>
            <person name="Khouri H."/>
            <person name="Roesch L.F.W."/>
            <person name="Krogfelt K.A."/>
            <person name="Struve C."/>
            <person name="Triplett E.W."/>
            <person name="Methe B.A."/>
        </authorList>
    </citation>
    <scope>NUCLEOTIDE SEQUENCE [LARGE SCALE GENOMIC DNA]</scope>
    <source>
        <strain>342</strain>
    </source>
</reference>
<name>GLSA_KLEP3</name>
<proteinExistence type="inferred from homology"/>
<sequence length="308" mass="33487">MAAVINNAMLEAILAEIRPLIGRGKVADYIPALASVSGDKLGIAISTVDGQHFAAGDAHERFSIQSISKVLSLVVAMNHYQEEEIWQRVGKDPSGQPFNSLLQLEIEQGKPRNPFINAGALVVCDMLQSRLSAPRQRMLEIVRRLSGVADIAYDPVVARSEFEHSARNAAIAWLMKSFGNFHNDVATVLQNYFHYCSLEMSCVELARTFLFLADRGIAPHLEAPVIAPIQSRQVNALMMTSGMYQNAGEFAWRVGLPAKSGVGGGIVAIVPQEMAIAVWSPELDDAGNSLAGVALLEKLTQRMGRSVF</sequence>
<feature type="chain" id="PRO_1000115697" description="Glutaminase">
    <location>
        <begin position="1"/>
        <end position="308"/>
    </location>
</feature>
<feature type="binding site" evidence="1">
    <location>
        <position position="66"/>
    </location>
    <ligand>
        <name>substrate</name>
    </ligand>
</feature>
<feature type="binding site" evidence="1">
    <location>
        <position position="117"/>
    </location>
    <ligand>
        <name>substrate</name>
    </ligand>
</feature>
<feature type="binding site" evidence="1">
    <location>
        <position position="161"/>
    </location>
    <ligand>
        <name>substrate</name>
    </ligand>
</feature>
<feature type="binding site" evidence="1">
    <location>
        <position position="168"/>
    </location>
    <ligand>
        <name>substrate</name>
    </ligand>
</feature>
<feature type="binding site" evidence="1">
    <location>
        <position position="192"/>
    </location>
    <ligand>
        <name>substrate</name>
    </ligand>
</feature>
<feature type="binding site" evidence="1">
    <location>
        <position position="244"/>
    </location>
    <ligand>
        <name>substrate</name>
    </ligand>
</feature>
<feature type="binding site" evidence="1">
    <location>
        <position position="262"/>
    </location>
    <ligand>
        <name>substrate</name>
    </ligand>
</feature>
<evidence type="ECO:0000255" key="1">
    <source>
        <dbReference type="HAMAP-Rule" id="MF_00313"/>
    </source>
</evidence>
<keyword id="KW-0378">Hydrolase</keyword>